<accession>Q4JXR5</accession>
<name>TRHO_CORJK</name>
<comment type="function">
    <text evidence="1">Catalyzes oxygen-dependent 5-hydroxyuridine (ho5U) modification at position 34 in tRNAs.</text>
</comment>
<comment type="catalytic activity">
    <reaction evidence="1">
        <text>uridine(34) in tRNA + AH2 + O2 = 5-hydroxyuridine(34) in tRNA + A + H2O</text>
        <dbReference type="Rhea" id="RHEA:64224"/>
        <dbReference type="Rhea" id="RHEA-COMP:11727"/>
        <dbReference type="Rhea" id="RHEA-COMP:13381"/>
        <dbReference type="ChEBI" id="CHEBI:13193"/>
        <dbReference type="ChEBI" id="CHEBI:15377"/>
        <dbReference type="ChEBI" id="CHEBI:15379"/>
        <dbReference type="ChEBI" id="CHEBI:17499"/>
        <dbReference type="ChEBI" id="CHEBI:65315"/>
        <dbReference type="ChEBI" id="CHEBI:136877"/>
    </reaction>
</comment>
<comment type="similarity">
    <text evidence="1">Belongs to the TrhO family.</text>
</comment>
<protein>
    <recommendedName>
        <fullName evidence="1">tRNA uridine(34) hydroxylase</fullName>
        <ecNumber evidence="1">1.14.-.-</ecNumber>
    </recommendedName>
    <alternativeName>
        <fullName evidence="1">tRNA hydroxylation protein O</fullName>
    </alternativeName>
</protein>
<keyword id="KW-0560">Oxidoreductase</keyword>
<keyword id="KW-1185">Reference proteome</keyword>
<keyword id="KW-0819">tRNA processing</keyword>
<sequence length="309" mass="34453">MGHSATDLNETRILLYYCFTPIDDPTAVMLWQRALCEQLELKGRILISKHGINGTVGGSLASCKQYVRRTREFPGFKKMEFKWSAGSADDFPRLSVKVREEIVAFGAPDELKVDENGVIGGGVHLKPEEVNKLVEERGDEVVFFDGRNAMEAEIGKFKNAIVPDVRTTHDFISEIESGKYDDLKDKPVVTYCTGGIRCEILSSLMKNRGFEEVYQIDGGIVRYGEKYGDKGLWEGSLYVFDGRMHMEFSDDAATLGRCRACGHATNDFHNCVNEQCREQILLCEECAADPESATCGRKECAEVAAEMVG</sequence>
<reference key="1">
    <citation type="journal article" date="2005" name="J. Bacteriol.">
        <title>Complete genome sequence and analysis of the multiresistant nosocomial pathogen Corynebacterium jeikeium K411, a lipid-requiring bacterium of the human skin flora.</title>
        <authorList>
            <person name="Tauch A."/>
            <person name="Kaiser O."/>
            <person name="Hain T."/>
            <person name="Goesmann A."/>
            <person name="Weisshaar B."/>
            <person name="Albersmeier A."/>
            <person name="Bekel T."/>
            <person name="Bischoff N."/>
            <person name="Brune I."/>
            <person name="Chakraborty T."/>
            <person name="Kalinowski J."/>
            <person name="Meyer F."/>
            <person name="Rupp O."/>
            <person name="Schneiker S."/>
            <person name="Viehoever P."/>
            <person name="Puehler A."/>
        </authorList>
    </citation>
    <scope>NUCLEOTIDE SEQUENCE [LARGE SCALE GENOMIC DNA]</scope>
    <source>
        <strain>K411</strain>
    </source>
</reference>
<evidence type="ECO:0000255" key="1">
    <source>
        <dbReference type="HAMAP-Rule" id="MF_00469"/>
    </source>
</evidence>
<proteinExistence type="inferred from homology"/>
<feature type="chain" id="PRO_0000242919" description="tRNA uridine(34) hydroxylase">
    <location>
        <begin position="1"/>
        <end position="309"/>
    </location>
</feature>
<feature type="domain" description="Rhodanese" evidence="1">
    <location>
        <begin position="137"/>
        <end position="232"/>
    </location>
</feature>
<feature type="active site" description="Cysteine persulfide intermediate" evidence="1">
    <location>
        <position position="192"/>
    </location>
</feature>
<dbReference type="EC" id="1.14.-.-" evidence="1"/>
<dbReference type="EMBL" id="CR931997">
    <property type="protein sequence ID" value="CAI36392.1"/>
    <property type="molecule type" value="Genomic_DNA"/>
</dbReference>
<dbReference type="RefSeq" id="WP_011272962.1">
    <property type="nucleotide sequence ID" value="NC_007164.1"/>
</dbReference>
<dbReference type="SMR" id="Q4JXR5"/>
<dbReference type="STRING" id="306537.jk0240"/>
<dbReference type="KEGG" id="cjk:jk0240"/>
<dbReference type="PATRIC" id="fig|306537.10.peg.250"/>
<dbReference type="eggNOG" id="COG1054">
    <property type="taxonomic scope" value="Bacteria"/>
</dbReference>
<dbReference type="HOGENOM" id="CLU_038878_1_0_11"/>
<dbReference type="OrthoDB" id="9778326at2"/>
<dbReference type="Proteomes" id="UP000000545">
    <property type="component" value="Chromosome"/>
</dbReference>
<dbReference type="GO" id="GO:0016705">
    <property type="term" value="F:oxidoreductase activity, acting on paired donors, with incorporation or reduction of molecular oxygen"/>
    <property type="evidence" value="ECO:0007669"/>
    <property type="project" value="UniProtKB-UniRule"/>
</dbReference>
<dbReference type="GO" id="GO:0006400">
    <property type="term" value="P:tRNA modification"/>
    <property type="evidence" value="ECO:0007669"/>
    <property type="project" value="UniProtKB-UniRule"/>
</dbReference>
<dbReference type="CDD" id="cd01518">
    <property type="entry name" value="RHOD_YceA"/>
    <property type="match status" value="1"/>
</dbReference>
<dbReference type="Gene3D" id="3.30.70.100">
    <property type="match status" value="1"/>
</dbReference>
<dbReference type="Gene3D" id="3.40.250.10">
    <property type="entry name" value="Rhodanese-like domain"/>
    <property type="match status" value="1"/>
</dbReference>
<dbReference type="HAMAP" id="MF_00469">
    <property type="entry name" value="TrhO"/>
    <property type="match status" value="1"/>
</dbReference>
<dbReference type="InterPro" id="IPR001763">
    <property type="entry name" value="Rhodanese-like_dom"/>
</dbReference>
<dbReference type="InterPro" id="IPR036873">
    <property type="entry name" value="Rhodanese-like_dom_sf"/>
</dbReference>
<dbReference type="InterPro" id="IPR022111">
    <property type="entry name" value="Rhodanese_C"/>
</dbReference>
<dbReference type="InterPro" id="IPR020936">
    <property type="entry name" value="TrhO"/>
</dbReference>
<dbReference type="InterPro" id="IPR040503">
    <property type="entry name" value="TRHO_N"/>
</dbReference>
<dbReference type="NCBIfam" id="NF001134">
    <property type="entry name" value="PRK00142.1-2"/>
    <property type="match status" value="1"/>
</dbReference>
<dbReference type="NCBIfam" id="NF001135">
    <property type="entry name" value="PRK00142.1-3"/>
    <property type="match status" value="1"/>
</dbReference>
<dbReference type="PANTHER" id="PTHR43268">
    <property type="entry name" value="THIOSULFATE SULFURTRANSFERASE/RHODANESE-LIKE DOMAIN-CONTAINING PROTEIN 2"/>
    <property type="match status" value="1"/>
</dbReference>
<dbReference type="PANTHER" id="PTHR43268:SF6">
    <property type="entry name" value="THIOSULFATE SULFURTRANSFERASE_RHODANESE-LIKE DOMAIN-CONTAINING PROTEIN 2"/>
    <property type="match status" value="1"/>
</dbReference>
<dbReference type="Pfam" id="PF00581">
    <property type="entry name" value="Rhodanese"/>
    <property type="match status" value="1"/>
</dbReference>
<dbReference type="Pfam" id="PF12368">
    <property type="entry name" value="Rhodanese_C"/>
    <property type="match status" value="1"/>
</dbReference>
<dbReference type="Pfam" id="PF17773">
    <property type="entry name" value="UPF0176_N"/>
    <property type="match status" value="1"/>
</dbReference>
<dbReference type="SMART" id="SM00450">
    <property type="entry name" value="RHOD"/>
    <property type="match status" value="1"/>
</dbReference>
<dbReference type="SUPFAM" id="SSF52821">
    <property type="entry name" value="Rhodanese/Cell cycle control phosphatase"/>
    <property type="match status" value="1"/>
</dbReference>
<dbReference type="PROSITE" id="PS50206">
    <property type="entry name" value="RHODANESE_3"/>
    <property type="match status" value="1"/>
</dbReference>
<gene>
    <name evidence="1" type="primary">trhO</name>
    <name type="ordered locus">jk0240</name>
</gene>
<organism>
    <name type="scientific">Corynebacterium jeikeium (strain K411)</name>
    <dbReference type="NCBI Taxonomy" id="306537"/>
    <lineage>
        <taxon>Bacteria</taxon>
        <taxon>Bacillati</taxon>
        <taxon>Actinomycetota</taxon>
        <taxon>Actinomycetes</taxon>
        <taxon>Mycobacteriales</taxon>
        <taxon>Corynebacteriaceae</taxon>
        <taxon>Corynebacterium</taxon>
    </lineage>
</organism>